<keyword id="KW-0963">Cytoplasm</keyword>
<keyword id="KW-0378">Hydrolase</keyword>
<keyword id="KW-1185">Reference proteome</keyword>
<keyword id="KW-0694">RNA-binding</keyword>
<keyword id="KW-0820">tRNA-binding</keyword>
<gene>
    <name evidence="1" type="primary">dtd</name>
    <name type="ordered locus">DSY2450</name>
</gene>
<name>DTD_DESHY</name>
<sequence>MRSVVQRVTQASVTVEGEVVGRIGAGLLVLFGVGRGDTEADLNWMVDKIAGLRLFEDGEGKMNRSVQDVGGEILMVSQFTLYGDCRKGKRPSFATAAPPETAGELFQQAVAKMRGYGLHVETGVFQAEMQVALVNDGPVTLLIDSEKNF</sequence>
<dbReference type="EC" id="3.1.1.96" evidence="1"/>
<dbReference type="EMBL" id="AP008230">
    <property type="protein sequence ID" value="BAE84239.1"/>
    <property type="molecule type" value="Genomic_DNA"/>
</dbReference>
<dbReference type="RefSeq" id="WP_011460350.1">
    <property type="nucleotide sequence ID" value="NC_007907.1"/>
</dbReference>
<dbReference type="SMR" id="Q24UQ3"/>
<dbReference type="STRING" id="138119.DSY2450"/>
<dbReference type="KEGG" id="dsy:DSY2450"/>
<dbReference type="eggNOG" id="COG1490">
    <property type="taxonomic scope" value="Bacteria"/>
</dbReference>
<dbReference type="HOGENOM" id="CLU_076901_1_0_9"/>
<dbReference type="Proteomes" id="UP000001946">
    <property type="component" value="Chromosome"/>
</dbReference>
<dbReference type="GO" id="GO:0005737">
    <property type="term" value="C:cytoplasm"/>
    <property type="evidence" value="ECO:0007669"/>
    <property type="project" value="UniProtKB-SubCell"/>
</dbReference>
<dbReference type="GO" id="GO:0051500">
    <property type="term" value="F:D-tyrosyl-tRNA(Tyr) deacylase activity"/>
    <property type="evidence" value="ECO:0007669"/>
    <property type="project" value="TreeGrafter"/>
</dbReference>
<dbReference type="GO" id="GO:0106026">
    <property type="term" value="F:Gly-tRNA(Ala) deacylase activity"/>
    <property type="evidence" value="ECO:0007669"/>
    <property type="project" value="UniProtKB-UniRule"/>
</dbReference>
<dbReference type="GO" id="GO:0043908">
    <property type="term" value="F:Ser(Gly)-tRNA(Ala) hydrolase activity"/>
    <property type="evidence" value="ECO:0007669"/>
    <property type="project" value="UniProtKB-UniRule"/>
</dbReference>
<dbReference type="GO" id="GO:0000049">
    <property type="term" value="F:tRNA binding"/>
    <property type="evidence" value="ECO:0007669"/>
    <property type="project" value="UniProtKB-UniRule"/>
</dbReference>
<dbReference type="GO" id="GO:0019478">
    <property type="term" value="P:D-amino acid catabolic process"/>
    <property type="evidence" value="ECO:0007669"/>
    <property type="project" value="UniProtKB-UniRule"/>
</dbReference>
<dbReference type="CDD" id="cd00563">
    <property type="entry name" value="Dtyr_deacylase"/>
    <property type="match status" value="1"/>
</dbReference>
<dbReference type="FunFam" id="3.50.80.10:FF:000001">
    <property type="entry name" value="D-aminoacyl-tRNA deacylase"/>
    <property type="match status" value="1"/>
</dbReference>
<dbReference type="Gene3D" id="3.50.80.10">
    <property type="entry name" value="D-tyrosyl-tRNA(Tyr) deacylase"/>
    <property type="match status" value="1"/>
</dbReference>
<dbReference type="HAMAP" id="MF_00518">
    <property type="entry name" value="Deacylase_Dtd"/>
    <property type="match status" value="1"/>
</dbReference>
<dbReference type="InterPro" id="IPR003732">
    <property type="entry name" value="Daa-tRNA_deacyls_DTD"/>
</dbReference>
<dbReference type="InterPro" id="IPR023509">
    <property type="entry name" value="DTD-like_sf"/>
</dbReference>
<dbReference type="NCBIfam" id="TIGR00256">
    <property type="entry name" value="D-aminoacyl-tRNA deacylase"/>
    <property type="match status" value="1"/>
</dbReference>
<dbReference type="PANTHER" id="PTHR10472:SF5">
    <property type="entry name" value="D-AMINOACYL-TRNA DEACYLASE 1"/>
    <property type="match status" value="1"/>
</dbReference>
<dbReference type="PANTHER" id="PTHR10472">
    <property type="entry name" value="D-TYROSYL-TRNA TYR DEACYLASE"/>
    <property type="match status" value="1"/>
</dbReference>
<dbReference type="Pfam" id="PF02580">
    <property type="entry name" value="Tyr_Deacylase"/>
    <property type="match status" value="1"/>
</dbReference>
<dbReference type="SUPFAM" id="SSF69500">
    <property type="entry name" value="DTD-like"/>
    <property type="match status" value="1"/>
</dbReference>
<reference key="1">
    <citation type="journal article" date="2006" name="J. Bacteriol.">
        <title>Complete genome sequence of the dehalorespiring bacterium Desulfitobacterium hafniense Y51 and comparison with Dehalococcoides ethenogenes 195.</title>
        <authorList>
            <person name="Nonaka H."/>
            <person name="Keresztes G."/>
            <person name="Shinoda Y."/>
            <person name="Ikenaga Y."/>
            <person name="Abe M."/>
            <person name="Naito K."/>
            <person name="Inatomi K."/>
            <person name="Furukawa K."/>
            <person name="Inui M."/>
            <person name="Yukawa H."/>
        </authorList>
    </citation>
    <scope>NUCLEOTIDE SEQUENCE [LARGE SCALE GENOMIC DNA]</scope>
    <source>
        <strain>Y51</strain>
    </source>
</reference>
<feature type="chain" id="PRO_0000259280" description="D-aminoacyl-tRNA deacylase">
    <location>
        <begin position="1"/>
        <end position="149"/>
    </location>
</feature>
<feature type="short sequence motif" description="Gly-cisPro motif, important for rejection of L-amino acids" evidence="1">
    <location>
        <begin position="137"/>
        <end position="138"/>
    </location>
</feature>
<accession>Q24UQ3</accession>
<evidence type="ECO:0000255" key="1">
    <source>
        <dbReference type="HAMAP-Rule" id="MF_00518"/>
    </source>
</evidence>
<protein>
    <recommendedName>
        <fullName evidence="1">D-aminoacyl-tRNA deacylase</fullName>
        <shortName evidence="1">DTD</shortName>
        <ecNumber evidence="1">3.1.1.96</ecNumber>
    </recommendedName>
    <alternativeName>
        <fullName evidence="1">Gly-tRNA(Ala) deacylase</fullName>
    </alternativeName>
</protein>
<organism>
    <name type="scientific">Desulfitobacterium hafniense (strain Y51)</name>
    <dbReference type="NCBI Taxonomy" id="138119"/>
    <lineage>
        <taxon>Bacteria</taxon>
        <taxon>Bacillati</taxon>
        <taxon>Bacillota</taxon>
        <taxon>Clostridia</taxon>
        <taxon>Eubacteriales</taxon>
        <taxon>Desulfitobacteriaceae</taxon>
        <taxon>Desulfitobacterium</taxon>
    </lineage>
</organism>
<comment type="function">
    <text evidence="1">An aminoacyl-tRNA editing enzyme that deacylates mischarged D-aminoacyl-tRNAs. Also deacylates mischarged glycyl-tRNA(Ala), protecting cells against glycine mischarging by AlaRS. Acts via tRNA-based rather than protein-based catalysis; rejects L-amino acids rather than detecting D-amino acids in the active site. By recycling D-aminoacyl-tRNA to D-amino acids and free tRNA molecules, this enzyme counteracts the toxicity associated with the formation of D-aminoacyl-tRNA entities in vivo and helps enforce protein L-homochirality.</text>
</comment>
<comment type="catalytic activity">
    <reaction evidence="1">
        <text>glycyl-tRNA(Ala) + H2O = tRNA(Ala) + glycine + H(+)</text>
        <dbReference type="Rhea" id="RHEA:53744"/>
        <dbReference type="Rhea" id="RHEA-COMP:9657"/>
        <dbReference type="Rhea" id="RHEA-COMP:13640"/>
        <dbReference type="ChEBI" id="CHEBI:15377"/>
        <dbReference type="ChEBI" id="CHEBI:15378"/>
        <dbReference type="ChEBI" id="CHEBI:57305"/>
        <dbReference type="ChEBI" id="CHEBI:78442"/>
        <dbReference type="ChEBI" id="CHEBI:78522"/>
        <dbReference type="EC" id="3.1.1.96"/>
    </reaction>
</comment>
<comment type="catalytic activity">
    <reaction evidence="1">
        <text>a D-aminoacyl-tRNA + H2O = a tRNA + a D-alpha-amino acid + H(+)</text>
        <dbReference type="Rhea" id="RHEA:13953"/>
        <dbReference type="Rhea" id="RHEA-COMP:10123"/>
        <dbReference type="Rhea" id="RHEA-COMP:10124"/>
        <dbReference type="ChEBI" id="CHEBI:15377"/>
        <dbReference type="ChEBI" id="CHEBI:15378"/>
        <dbReference type="ChEBI" id="CHEBI:59871"/>
        <dbReference type="ChEBI" id="CHEBI:78442"/>
        <dbReference type="ChEBI" id="CHEBI:79333"/>
        <dbReference type="EC" id="3.1.1.96"/>
    </reaction>
</comment>
<comment type="subunit">
    <text evidence="1">Homodimer.</text>
</comment>
<comment type="subcellular location">
    <subcellularLocation>
        <location evidence="1">Cytoplasm</location>
    </subcellularLocation>
</comment>
<comment type="domain">
    <text evidence="1">A Gly-cisPro motif from one monomer fits into the active site of the other monomer to allow specific chiral rejection of L-amino acids.</text>
</comment>
<comment type="similarity">
    <text evidence="1">Belongs to the DTD family.</text>
</comment>
<proteinExistence type="inferred from homology"/>